<evidence type="ECO:0000255" key="1">
    <source>
        <dbReference type="HAMAP-Rule" id="MF_00152"/>
    </source>
</evidence>
<protein>
    <recommendedName>
        <fullName evidence="1">Probable endonuclease 4</fullName>
        <ecNumber evidence="1">3.1.21.2</ecNumber>
    </recommendedName>
    <alternativeName>
        <fullName evidence="1">Endodeoxyribonuclease IV</fullName>
    </alternativeName>
    <alternativeName>
        <fullName evidence="1">Endonuclease IV</fullName>
    </alternativeName>
</protein>
<sequence length="281" mass="31825">MKYVGAHVSASGGVENAVKNAVDIGANGFALFTKNQRQWVAKPLSEKSINKFKELMEEHGFIADGVLPHDSYLINLGHPEEDKREKSYNAFVDEIRRVEQLGLKYLNFHPGSHLKKISEEECLDLISENINRAIKDTEYATLVLETTAGQGSNLGYKFEHLAYIIDNIEDKSRIGVCIDTAHIFAAGYDIRTKEAYEKTMQEFDEIVGFKYLKGMHINDSKAKFASRVDRHHSLGKGEIGIDAFKFIMQDSRIDNIPLVLETIEPEIWADEIKLLKSFENV</sequence>
<feature type="chain" id="PRO_1000123334" description="Probable endonuclease 4">
    <location>
        <begin position="1"/>
        <end position="281"/>
    </location>
</feature>
<feature type="binding site" evidence="1">
    <location>
        <position position="69"/>
    </location>
    <ligand>
        <name>Zn(2+)</name>
        <dbReference type="ChEBI" id="CHEBI:29105"/>
        <label>1</label>
    </ligand>
</feature>
<feature type="binding site" evidence="1">
    <location>
        <position position="109"/>
    </location>
    <ligand>
        <name>Zn(2+)</name>
        <dbReference type="ChEBI" id="CHEBI:29105"/>
        <label>1</label>
    </ligand>
</feature>
<feature type="binding site" evidence="1">
    <location>
        <position position="145"/>
    </location>
    <ligand>
        <name>Zn(2+)</name>
        <dbReference type="ChEBI" id="CHEBI:29105"/>
        <label>1</label>
    </ligand>
</feature>
<feature type="binding site" evidence="1">
    <location>
        <position position="145"/>
    </location>
    <ligand>
        <name>Zn(2+)</name>
        <dbReference type="ChEBI" id="CHEBI:29105"/>
        <label>2</label>
    </ligand>
</feature>
<feature type="binding site" evidence="1">
    <location>
        <position position="179"/>
    </location>
    <ligand>
        <name>Zn(2+)</name>
        <dbReference type="ChEBI" id="CHEBI:29105"/>
        <label>2</label>
    </ligand>
</feature>
<feature type="binding site" evidence="1">
    <location>
        <position position="182"/>
    </location>
    <ligand>
        <name>Zn(2+)</name>
        <dbReference type="ChEBI" id="CHEBI:29105"/>
        <label>3</label>
    </ligand>
</feature>
<feature type="binding site" evidence="1">
    <location>
        <position position="216"/>
    </location>
    <ligand>
        <name>Zn(2+)</name>
        <dbReference type="ChEBI" id="CHEBI:29105"/>
        <label>2</label>
    </ligand>
</feature>
<feature type="binding site" evidence="1">
    <location>
        <position position="229"/>
    </location>
    <ligand>
        <name>Zn(2+)</name>
        <dbReference type="ChEBI" id="CHEBI:29105"/>
        <label>3</label>
    </ligand>
</feature>
<feature type="binding site" evidence="1">
    <location>
        <position position="231"/>
    </location>
    <ligand>
        <name>Zn(2+)</name>
        <dbReference type="ChEBI" id="CHEBI:29105"/>
        <label>3</label>
    </ligand>
</feature>
<feature type="binding site" evidence="1">
    <location>
        <position position="261"/>
    </location>
    <ligand>
        <name>Zn(2+)</name>
        <dbReference type="ChEBI" id="CHEBI:29105"/>
        <label>2</label>
    </ligand>
</feature>
<reference key="1">
    <citation type="journal article" date="2009" name="PLoS Genet.">
        <title>Adaptations to submarine hydrothermal environments exemplified by the genome of Nautilia profundicola.</title>
        <authorList>
            <person name="Campbell B.J."/>
            <person name="Smith J.L."/>
            <person name="Hanson T.E."/>
            <person name="Klotz M.G."/>
            <person name="Stein L.Y."/>
            <person name="Lee C.K."/>
            <person name="Wu D."/>
            <person name="Robinson J.M."/>
            <person name="Khouri H.M."/>
            <person name="Eisen J.A."/>
            <person name="Cary S.C."/>
        </authorList>
    </citation>
    <scope>NUCLEOTIDE SEQUENCE [LARGE SCALE GENOMIC DNA]</scope>
    <source>
        <strain>ATCC BAA-1463 / DSM 18972 / AmH</strain>
    </source>
</reference>
<keyword id="KW-0227">DNA damage</keyword>
<keyword id="KW-0234">DNA repair</keyword>
<keyword id="KW-0255">Endonuclease</keyword>
<keyword id="KW-0378">Hydrolase</keyword>
<keyword id="KW-0479">Metal-binding</keyword>
<keyword id="KW-0540">Nuclease</keyword>
<keyword id="KW-0862">Zinc</keyword>
<proteinExistence type="inferred from homology"/>
<accession>B9L9K0</accession>
<name>END4_NAUPA</name>
<organism>
    <name type="scientific">Nautilia profundicola (strain ATCC BAA-1463 / DSM 18972 / AmH)</name>
    <dbReference type="NCBI Taxonomy" id="598659"/>
    <lineage>
        <taxon>Bacteria</taxon>
        <taxon>Pseudomonadati</taxon>
        <taxon>Campylobacterota</taxon>
        <taxon>Epsilonproteobacteria</taxon>
        <taxon>Nautiliales</taxon>
        <taxon>Nautiliaceae</taxon>
        <taxon>Nautilia</taxon>
    </lineage>
</organism>
<dbReference type="EC" id="3.1.21.2" evidence="1"/>
<dbReference type="EMBL" id="CP001279">
    <property type="protein sequence ID" value="ACM92943.1"/>
    <property type="molecule type" value="Genomic_DNA"/>
</dbReference>
<dbReference type="RefSeq" id="WP_015901995.1">
    <property type="nucleotide sequence ID" value="NC_012115.1"/>
</dbReference>
<dbReference type="SMR" id="B9L9K0"/>
<dbReference type="STRING" id="598659.NAMH_0905"/>
<dbReference type="KEGG" id="nam:NAMH_0905"/>
<dbReference type="eggNOG" id="COG0648">
    <property type="taxonomic scope" value="Bacteria"/>
</dbReference>
<dbReference type="HOGENOM" id="CLU_025885_0_4_7"/>
<dbReference type="OrthoDB" id="9805666at2"/>
<dbReference type="Proteomes" id="UP000000448">
    <property type="component" value="Chromosome"/>
</dbReference>
<dbReference type="GO" id="GO:0008833">
    <property type="term" value="F:deoxyribonuclease IV (phage-T4-induced) activity"/>
    <property type="evidence" value="ECO:0007669"/>
    <property type="project" value="UniProtKB-UniRule"/>
</dbReference>
<dbReference type="GO" id="GO:0003677">
    <property type="term" value="F:DNA binding"/>
    <property type="evidence" value="ECO:0007669"/>
    <property type="project" value="InterPro"/>
</dbReference>
<dbReference type="GO" id="GO:0003906">
    <property type="term" value="F:DNA-(apurinic or apyrimidinic site) endonuclease activity"/>
    <property type="evidence" value="ECO:0007669"/>
    <property type="project" value="TreeGrafter"/>
</dbReference>
<dbReference type="GO" id="GO:0008081">
    <property type="term" value="F:phosphoric diester hydrolase activity"/>
    <property type="evidence" value="ECO:0007669"/>
    <property type="project" value="TreeGrafter"/>
</dbReference>
<dbReference type="GO" id="GO:0008270">
    <property type="term" value="F:zinc ion binding"/>
    <property type="evidence" value="ECO:0007669"/>
    <property type="project" value="UniProtKB-UniRule"/>
</dbReference>
<dbReference type="GO" id="GO:0006284">
    <property type="term" value="P:base-excision repair"/>
    <property type="evidence" value="ECO:0007669"/>
    <property type="project" value="TreeGrafter"/>
</dbReference>
<dbReference type="CDD" id="cd00019">
    <property type="entry name" value="AP2Ec"/>
    <property type="match status" value="1"/>
</dbReference>
<dbReference type="FunFam" id="3.20.20.150:FF:000001">
    <property type="entry name" value="Probable endonuclease 4"/>
    <property type="match status" value="1"/>
</dbReference>
<dbReference type="Gene3D" id="3.20.20.150">
    <property type="entry name" value="Divalent-metal-dependent TIM barrel enzymes"/>
    <property type="match status" value="1"/>
</dbReference>
<dbReference type="HAMAP" id="MF_00152">
    <property type="entry name" value="Nfo"/>
    <property type="match status" value="1"/>
</dbReference>
<dbReference type="InterPro" id="IPR001719">
    <property type="entry name" value="AP_endonuc_2"/>
</dbReference>
<dbReference type="InterPro" id="IPR018246">
    <property type="entry name" value="AP_endonuc_F2_Zn_BS"/>
</dbReference>
<dbReference type="InterPro" id="IPR036237">
    <property type="entry name" value="Xyl_isomerase-like_sf"/>
</dbReference>
<dbReference type="InterPro" id="IPR013022">
    <property type="entry name" value="Xyl_isomerase-like_TIM-brl"/>
</dbReference>
<dbReference type="NCBIfam" id="TIGR00587">
    <property type="entry name" value="nfo"/>
    <property type="match status" value="1"/>
</dbReference>
<dbReference type="NCBIfam" id="NF002199">
    <property type="entry name" value="PRK01060.1-4"/>
    <property type="match status" value="1"/>
</dbReference>
<dbReference type="PANTHER" id="PTHR21445:SF0">
    <property type="entry name" value="APURINIC-APYRIMIDINIC ENDONUCLEASE"/>
    <property type="match status" value="1"/>
</dbReference>
<dbReference type="PANTHER" id="PTHR21445">
    <property type="entry name" value="ENDONUCLEASE IV ENDODEOXYRIBONUCLEASE IV"/>
    <property type="match status" value="1"/>
</dbReference>
<dbReference type="Pfam" id="PF01261">
    <property type="entry name" value="AP_endonuc_2"/>
    <property type="match status" value="1"/>
</dbReference>
<dbReference type="SMART" id="SM00518">
    <property type="entry name" value="AP2Ec"/>
    <property type="match status" value="1"/>
</dbReference>
<dbReference type="SUPFAM" id="SSF51658">
    <property type="entry name" value="Xylose isomerase-like"/>
    <property type="match status" value="1"/>
</dbReference>
<dbReference type="PROSITE" id="PS00729">
    <property type="entry name" value="AP_NUCLEASE_F2_1"/>
    <property type="match status" value="1"/>
</dbReference>
<dbReference type="PROSITE" id="PS00731">
    <property type="entry name" value="AP_NUCLEASE_F2_3"/>
    <property type="match status" value="1"/>
</dbReference>
<dbReference type="PROSITE" id="PS51432">
    <property type="entry name" value="AP_NUCLEASE_F2_4"/>
    <property type="match status" value="1"/>
</dbReference>
<comment type="function">
    <text evidence="1">Endonuclease IV plays a role in DNA repair. It cleaves phosphodiester bonds at apurinic or apyrimidinic (AP) sites, generating a 3'-hydroxyl group and a 5'-terminal sugar phosphate.</text>
</comment>
<comment type="catalytic activity">
    <reaction evidence="1">
        <text>Endonucleolytic cleavage to 5'-phosphooligonucleotide end-products.</text>
        <dbReference type="EC" id="3.1.21.2"/>
    </reaction>
</comment>
<comment type="cofactor">
    <cofactor evidence="1">
        <name>Zn(2+)</name>
        <dbReference type="ChEBI" id="CHEBI:29105"/>
    </cofactor>
    <text evidence="1">Binds 3 Zn(2+) ions.</text>
</comment>
<comment type="similarity">
    <text evidence="1">Belongs to the AP endonuclease 2 family.</text>
</comment>
<gene>
    <name evidence="1" type="primary">nfo</name>
    <name type="ordered locus">NAMH_0905</name>
</gene>